<dbReference type="EC" id="5.4.2.12" evidence="1"/>
<dbReference type="EMBL" id="BX571662">
    <property type="protein sequence ID" value="CAE11039.1"/>
    <property type="molecule type" value="Genomic_DNA"/>
</dbReference>
<dbReference type="RefSeq" id="WP_011139821.1">
    <property type="nucleotide sequence ID" value="NC_005090.1"/>
</dbReference>
<dbReference type="SMR" id="Q7M7W9"/>
<dbReference type="STRING" id="273121.WS2039"/>
<dbReference type="KEGG" id="wsu:WS2039"/>
<dbReference type="eggNOG" id="COG0696">
    <property type="taxonomic scope" value="Bacteria"/>
</dbReference>
<dbReference type="HOGENOM" id="CLU_026099_2_0_7"/>
<dbReference type="UniPathway" id="UPA00109">
    <property type="reaction ID" value="UER00186"/>
</dbReference>
<dbReference type="Proteomes" id="UP000000422">
    <property type="component" value="Chromosome"/>
</dbReference>
<dbReference type="GO" id="GO:0005829">
    <property type="term" value="C:cytosol"/>
    <property type="evidence" value="ECO:0007669"/>
    <property type="project" value="TreeGrafter"/>
</dbReference>
<dbReference type="GO" id="GO:0030145">
    <property type="term" value="F:manganese ion binding"/>
    <property type="evidence" value="ECO:0007669"/>
    <property type="project" value="UniProtKB-UniRule"/>
</dbReference>
<dbReference type="GO" id="GO:0004619">
    <property type="term" value="F:phosphoglycerate mutase activity"/>
    <property type="evidence" value="ECO:0007669"/>
    <property type="project" value="UniProtKB-EC"/>
</dbReference>
<dbReference type="GO" id="GO:0006007">
    <property type="term" value="P:glucose catabolic process"/>
    <property type="evidence" value="ECO:0007669"/>
    <property type="project" value="InterPro"/>
</dbReference>
<dbReference type="GO" id="GO:0006096">
    <property type="term" value="P:glycolytic process"/>
    <property type="evidence" value="ECO:0007669"/>
    <property type="project" value="UniProtKB-UniRule"/>
</dbReference>
<dbReference type="CDD" id="cd16010">
    <property type="entry name" value="iPGM"/>
    <property type="match status" value="1"/>
</dbReference>
<dbReference type="FunFam" id="3.40.1450.10:FF:000002">
    <property type="entry name" value="2,3-bisphosphoglycerate-independent phosphoglycerate mutase"/>
    <property type="match status" value="1"/>
</dbReference>
<dbReference type="Gene3D" id="3.40.720.10">
    <property type="entry name" value="Alkaline Phosphatase, subunit A"/>
    <property type="match status" value="1"/>
</dbReference>
<dbReference type="Gene3D" id="3.40.1450.10">
    <property type="entry name" value="BPG-independent phosphoglycerate mutase, domain B"/>
    <property type="match status" value="1"/>
</dbReference>
<dbReference type="HAMAP" id="MF_01038">
    <property type="entry name" value="GpmI"/>
    <property type="match status" value="1"/>
</dbReference>
<dbReference type="InterPro" id="IPR017850">
    <property type="entry name" value="Alkaline_phosphatase_core_sf"/>
</dbReference>
<dbReference type="InterPro" id="IPR011258">
    <property type="entry name" value="BPG-indep_PGM_N"/>
</dbReference>
<dbReference type="InterPro" id="IPR006124">
    <property type="entry name" value="Metalloenzyme"/>
</dbReference>
<dbReference type="InterPro" id="IPR036646">
    <property type="entry name" value="PGAM_B_sf"/>
</dbReference>
<dbReference type="InterPro" id="IPR005995">
    <property type="entry name" value="Pgm_bpd_ind"/>
</dbReference>
<dbReference type="NCBIfam" id="TIGR01307">
    <property type="entry name" value="pgm_bpd_ind"/>
    <property type="match status" value="1"/>
</dbReference>
<dbReference type="PANTHER" id="PTHR31637">
    <property type="entry name" value="2,3-BISPHOSPHOGLYCERATE-INDEPENDENT PHOSPHOGLYCERATE MUTASE"/>
    <property type="match status" value="1"/>
</dbReference>
<dbReference type="PANTHER" id="PTHR31637:SF0">
    <property type="entry name" value="2,3-BISPHOSPHOGLYCERATE-INDEPENDENT PHOSPHOGLYCERATE MUTASE"/>
    <property type="match status" value="1"/>
</dbReference>
<dbReference type="Pfam" id="PF06415">
    <property type="entry name" value="iPGM_N"/>
    <property type="match status" value="1"/>
</dbReference>
<dbReference type="Pfam" id="PF01676">
    <property type="entry name" value="Metalloenzyme"/>
    <property type="match status" value="1"/>
</dbReference>
<dbReference type="PIRSF" id="PIRSF001492">
    <property type="entry name" value="IPGAM"/>
    <property type="match status" value="1"/>
</dbReference>
<dbReference type="SUPFAM" id="SSF64158">
    <property type="entry name" value="2,3-Bisphosphoglycerate-independent phosphoglycerate mutase, substrate-binding domain"/>
    <property type="match status" value="1"/>
</dbReference>
<dbReference type="SUPFAM" id="SSF53649">
    <property type="entry name" value="Alkaline phosphatase-like"/>
    <property type="match status" value="1"/>
</dbReference>
<organism>
    <name type="scientific">Wolinella succinogenes (strain ATCC 29543 / DSM 1740 / CCUG 13145 / JCM 31913 / LMG 7466 / NCTC 11488 / FDC 602W)</name>
    <name type="common">Vibrio succinogenes</name>
    <dbReference type="NCBI Taxonomy" id="273121"/>
    <lineage>
        <taxon>Bacteria</taxon>
        <taxon>Pseudomonadati</taxon>
        <taxon>Campylobacterota</taxon>
        <taxon>Epsilonproteobacteria</taxon>
        <taxon>Campylobacterales</taxon>
        <taxon>Helicobacteraceae</taxon>
        <taxon>Wolinella</taxon>
    </lineage>
</organism>
<reference key="1">
    <citation type="journal article" date="2003" name="Proc. Natl. Acad. Sci. U.S.A.">
        <title>Complete genome sequence and analysis of Wolinella succinogenes.</title>
        <authorList>
            <person name="Baar C."/>
            <person name="Eppinger M."/>
            <person name="Raddatz G."/>
            <person name="Simon J."/>
            <person name="Lanz C."/>
            <person name="Klimmek O."/>
            <person name="Nandakumar R."/>
            <person name="Gross R."/>
            <person name="Rosinus A."/>
            <person name="Keller H."/>
            <person name="Jagtap P."/>
            <person name="Linke B."/>
            <person name="Meyer F."/>
            <person name="Lederer H."/>
            <person name="Schuster S.C."/>
        </authorList>
    </citation>
    <scope>NUCLEOTIDE SEQUENCE [LARGE SCALE GENOMIC DNA]</scope>
    <source>
        <strain>ATCC 29543 / DSM 1740 / CCUG 13145 / JCM 31913 / LMG 7466 / NCTC 11488 / FDC 602W</strain>
    </source>
</reference>
<keyword id="KW-0324">Glycolysis</keyword>
<keyword id="KW-0413">Isomerase</keyword>
<keyword id="KW-0464">Manganese</keyword>
<keyword id="KW-0479">Metal-binding</keyword>
<keyword id="KW-1185">Reference proteome</keyword>
<comment type="function">
    <text evidence="1">Catalyzes the interconversion of 2-phosphoglycerate and 3-phosphoglycerate.</text>
</comment>
<comment type="catalytic activity">
    <reaction evidence="1">
        <text>(2R)-2-phosphoglycerate = (2R)-3-phosphoglycerate</text>
        <dbReference type="Rhea" id="RHEA:15901"/>
        <dbReference type="ChEBI" id="CHEBI:58272"/>
        <dbReference type="ChEBI" id="CHEBI:58289"/>
        <dbReference type="EC" id="5.4.2.12"/>
    </reaction>
</comment>
<comment type="cofactor">
    <cofactor evidence="1">
        <name>Mn(2+)</name>
        <dbReference type="ChEBI" id="CHEBI:29035"/>
    </cofactor>
    <text evidence="1">Binds 2 manganese ions per subunit.</text>
</comment>
<comment type="pathway">
    <text evidence="1">Carbohydrate degradation; glycolysis; pyruvate from D-glyceraldehyde 3-phosphate: step 3/5.</text>
</comment>
<comment type="subunit">
    <text evidence="1">Monomer.</text>
</comment>
<comment type="similarity">
    <text evidence="1">Belongs to the BPG-independent phosphoglycerate mutase family.</text>
</comment>
<gene>
    <name evidence="1" type="primary">gpmI</name>
    <name type="synonym">pgm</name>
    <name type="ordered locus">WS2039</name>
</gene>
<sequence length="492" mass="53432">MAQKTLLIITDGIGHKPSSPHNAFTQAKKPTYDSLFASAPHALLSTHGLSVGLPEGQMGNSEVGHMCIGAGRILYQDLVKISLALKDGSLEKNPTLLGFSSRAKRIHLAGLASDGGVHSHMEHLLGLAQIFSRLGHEVLLHLITDGRDVSPTSSKEFIAQALALESDLIKIATISGRYYAMDRDKRWDRIKRAFGVIARGDSPTSLTPQEYIQAQYQAGITDEFIEPAALGGYQGFEPSDGFVFANFRSDRAREIVSALGGASFEGFDRGAYQPPKTLAMTSYDDSFPFPILFPKEKVEPTLAQVISEAGLSQLHVAETEKYAHVTFFFNGGIETPWENESRVLIPSPSVATYDLKPEMSAPEVAEATLSGMRQGYDFIVVNFANGDMVGHTGNTEAAISAVESVDRELGRLLEEAKKSGYAVILTSDHGNCEEMRDERGSMLTNHTVGEVWCFILAQGVTEIREGGLNQVAPTVLKIMGLPTPKEMDSPLF</sequence>
<accession>Q7M7W9</accession>
<feature type="chain" id="PRO_0000212233" description="2,3-bisphosphoglycerate-independent phosphoglycerate mutase">
    <location>
        <begin position="1"/>
        <end position="492"/>
    </location>
</feature>
<feature type="active site" description="Phosphoserine intermediate" evidence="1">
    <location>
        <position position="61"/>
    </location>
</feature>
<feature type="binding site" evidence="1">
    <location>
        <position position="11"/>
    </location>
    <ligand>
        <name>Mn(2+)</name>
        <dbReference type="ChEBI" id="CHEBI:29035"/>
        <label>2</label>
    </ligand>
</feature>
<feature type="binding site" evidence="1">
    <location>
        <position position="61"/>
    </location>
    <ligand>
        <name>Mn(2+)</name>
        <dbReference type="ChEBI" id="CHEBI:29035"/>
        <label>2</label>
    </ligand>
</feature>
<feature type="binding site" evidence="1">
    <location>
        <position position="118"/>
    </location>
    <ligand>
        <name>substrate</name>
    </ligand>
</feature>
<feature type="binding site" evidence="1">
    <location>
        <begin position="147"/>
        <end position="148"/>
    </location>
    <ligand>
        <name>substrate</name>
    </ligand>
</feature>
<feature type="binding site" evidence="1">
    <location>
        <position position="177"/>
    </location>
    <ligand>
        <name>substrate</name>
    </ligand>
</feature>
<feature type="binding site" evidence="1">
    <location>
        <position position="183"/>
    </location>
    <ligand>
        <name>substrate</name>
    </ligand>
</feature>
<feature type="binding site" evidence="1">
    <location>
        <begin position="248"/>
        <end position="251"/>
    </location>
    <ligand>
        <name>substrate</name>
    </ligand>
</feature>
<feature type="binding site" evidence="1">
    <location>
        <position position="321"/>
    </location>
    <ligand>
        <name>substrate</name>
    </ligand>
</feature>
<feature type="binding site" evidence="1">
    <location>
        <position position="387"/>
    </location>
    <ligand>
        <name>Mn(2+)</name>
        <dbReference type="ChEBI" id="CHEBI:29035"/>
        <label>1</label>
    </ligand>
</feature>
<feature type="binding site" evidence="1">
    <location>
        <position position="391"/>
    </location>
    <ligand>
        <name>Mn(2+)</name>
        <dbReference type="ChEBI" id="CHEBI:29035"/>
        <label>1</label>
    </ligand>
</feature>
<feature type="binding site" evidence="1">
    <location>
        <position position="428"/>
    </location>
    <ligand>
        <name>Mn(2+)</name>
        <dbReference type="ChEBI" id="CHEBI:29035"/>
        <label>2</label>
    </ligand>
</feature>
<feature type="binding site" evidence="1">
    <location>
        <position position="429"/>
    </location>
    <ligand>
        <name>Mn(2+)</name>
        <dbReference type="ChEBI" id="CHEBI:29035"/>
        <label>2</label>
    </ligand>
</feature>
<feature type="binding site" evidence="1">
    <location>
        <position position="446"/>
    </location>
    <ligand>
        <name>Mn(2+)</name>
        <dbReference type="ChEBI" id="CHEBI:29035"/>
        <label>1</label>
    </ligand>
</feature>
<proteinExistence type="inferred from homology"/>
<evidence type="ECO:0000255" key="1">
    <source>
        <dbReference type="HAMAP-Rule" id="MF_01038"/>
    </source>
</evidence>
<name>GPMI_WOLSU</name>
<protein>
    <recommendedName>
        <fullName evidence="1">2,3-bisphosphoglycerate-independent phosphoglycerate mutase</fullName>
        <shortName evidence="1">BPG-independent PGAM</shortName>
        <shortName evidence="1">Phosphoglyceromutase</shortName>
        <shortName evidence="1">iPGM</shortName>
        <ecNumber evidence="1">5.4.2.12</ecNumber>
    </recommendedName>
</protein>